<organism>
    <name type="scientific">Homo sapiens</name>
    <name type="common">Human</name>
    <dbReference type="NCBI Taxonomy" id="9606"/>
    <lineage>
        <taxon>Eukaryota</taxon>
        <taxon>Metazoa</taxon>
        <taxon>Chordata</taxon>
        <taxon>Craniata</taxon>
        <taxon>Vertebrata</taxon>
        <taxon>Euteleostomi</taxon>
        <taxon>Mammalia</taxon>
        <taxon>Eutheria</taxon>
        <taxon>Euarchontoglires</taxon>
        <taxon>Primates</taxon>
        <taxon>Haplorrhini</taxon>
        <taxon>Catarrhini</taxon>
        <taxon>Hominidae</taxon>
        <taxon>Homo</taxon>
    </lineage>
</organism>
<gene>
    <name evidence="12 15" type="primary">CCND2</name>
</gene>
<keyword id="KW-0002">3D-structure</keyword>
<keyword id="KW-0025">Alternative splicing</keyword>
<keyword id="KW-0131">Cell cycle</keyword>
<keyword id="KW-0132">Cell division</keyword>
<keyword id="KW-0195">Cyclin</keyword>
<keyword id="KW-0963">Cytoplasm</keyword>
<keyword id="KW-0225">Disease variant</keyword>
<keyword id="KW-0472">Membrane</keyword>
<keyword id="KW-0539">Nucleus</keyword>
<keyword id="KW-0597">Phosphoprotein</keyword>
<keyword id="KW-1267">Proteomics identification</keyword>
<keyword id="KW-1185">Reference proteome</keyword>
<keyword id="KW-0832">Ubl conjugation</keyword>
<sequence>MELLCHEVDPVRRAVRDRNLLRDDRVLQNLLTIEERYLPQCSYFKCVQKDIQPYMRRMVATWMLEVCEEQKCEEEVFPLAMNYLDRFLAGVPTPKSHLQLLGAVCMFLASKLKETSPLTAEKLCIYTDNSIKPQELLEWELVVLGKLKWNLAAVTPHDFIEHILRKLPQQREKLSLIRKHAQTFIALCATDFKFAMYPPSMIATGSVGAAICGLQQDEEVSSLTCDALTELLAKITNTDVDCLKACQEQIEAVLLNSLQQYRQDQRDGSKSEDELDQASTPTDVRDIDL</sequence>
<comment type="function">
    <text evidence="5 10">Regulatory component of the cyclin D2-CDK4 (DC) complex that phosphorylates and inhibits members of the retinoblastoma (RB) protein family including RB1 and regulates the cell-cycle during G(1)/S transition (PubMed:18827403, PubMed:8114739). Phosphorylation of RB1 allows dissociation of the transcription factor E2F from the RB/E2F complex and the subsequent transcription of E2F target genes which are responsible for the progression through the G(1) phase (PubMed:18827403, PubMed:8114739). Hypophosphorylates RB1 in early G(1) phase (PubMed:18827403, PubMed:8114739). Cyclin D-CDK4 complexes are major integrators of various mitogenenic and antimitogenic signals (PubMed:18827403, PubMed:8114739).</text>
</comment>
<comment type="subunit">
    <text evidence="5 10">Interacts with either CDK4 or CDK6 protein kinase to form a serine/threonine kinase holoenzyme complex (PubMed:18827403, PubMed:8114739). The cyclin subunit imparts substrate specificity to the complex (PubMed:18827403, PubMed:8114739).</text>
</comment>
<comment type="interaction">
    <interactant intactId="EBI-748789">
        <id>P30279</id>
    </interactant>
    <interactant intactId="EBI-375096">
        <id>P24941</id>
        <label>CDK2</label>
    </interactant>
    <organismsDiffer>false</organismsDiffer>
    <experiments>4</experiments>
</comment>
<comment type="interaction">
    <interactant intactId="EBI-748789">
        <id>P30279</id>
    </interactant>
    <interactant intactId="EBI-295644">
        <id>P11802</id>
        <label>CDK4</label>
    </interactant>
    <organismsDiffer>false</organismsDiffer>
    <experiments>17</experiments>
</comment>
<comment type="interaction">
    <interactant intactId="EBI-748789">
        <id>P30279</id>
    </interactant>
    <interactant intactId="EBI-1041567">
        <id>Q00535</id>
        <label>CDK5</label>
    </interactant>
    <organismsDiffer>false</organismsDiffer>
    <experiments>18</experiments>
</comment>
<comment type="interaction">
    <interactant intactId="EBI-748789">
        <id>P30279</id>
    </interactant>
    <interactant intactId="EBI-375077">
        <id>P38936</id>
        <label>CDKN1A</label>
    </interactant>
    <organismsDiffer>false</organismsDiffer>
    <experiments>19</experiments>
</comment>
<comment type="interaction">
    <interactant intactId="EBI-748789">
        <id>P30279</id>
    </interactant>
    <interactant intactId="EBI-519280">
        <id>P46527</id>
        <label>CDKN1B</label>
    </interactant>
    <organismsDiffer>false</organismsDiffer>
    <experiments>8</experiments>
</comment>
<comment type="subcellular location">
    <subcellularLocation>
        <location evidence="5">Nucleus</location>
    </subcellularLocation>
    <subcellularLocation>
        <location evidence="5">Cytoplasm</location>
    </subcellularLocation>
    <subcellularLocation>
        <location evidence="5">Nucleus membrane</location>
    </subcellularLocation>
    <text evidence="5">Cyclin D-CDK4 complexes accumulate at the nuclear membrane and are then translocated into the nucleus through interaction with KIP/CIP family members.</text>
</comment>
<comment type="subcellular location">
    <molecule>Isoform 2</molecule>
    <subcellularLocation>
        <location evidence="4">Cytoplasm</location>
    </subcellularLocation>
</comment>
<comment type="alternative products">
    <event type="alternative splicing"/>
    <isoform>
        <id>P30279-1</id>
        <name>1</name>
        <sequence type="displayed"/>
    </isoform>
    <isoform>
        <id>P30279-2</id>
        <name>2</name>
        <name>Truncated</name>
        <sequence type="described" ref="VSP_057295 VSP_057296"/>
    </isoform>
</comment>
<comment type="PTM">
    <text evidence="1">Phosphorylation at Thr-280 by MAP kinases is required for ubiquitination and degradation by the DCX(AMBRA1) complex.</text>
</comment>
<comment type="PTM">
    <text evidence="6 8 9">Ubiquitinated by the DCX(AMBRA1) complex during the transition from G1 to S cell phase, leading to its degradation: ubiquitination is dependent on Thr-280 phosphorylation (PubMed:33854235, PubMed:33854239). The DCX(AMBRA1) complex represents the major regulator of CCND2 stability during the G1/S transition (PubMed:33854235, PubMed:33854239). Polyubiquitinated by the SCF(FBXL2) complex, leading to proteasomal degradation (PubMed:22323446).</text>
</comment>
<comment type="disease" evidence="7">
    <disease id="DI-04184">
        <name>Megalencephaly-polymicrogyria-polydactyly-hydrocephalus syndrome 3</name>
        <acronym>MPPH3</acronym>
        <description>A syndrome characterized by megalencephaly, ventriculomegaly that may lead to hydrocephalus, and polymicrogyria; polydactyly may also be seen. There is considerable phenotypic similarity between this disorder and the megalencephaly-capillary malformation syndrome.</description>
        <dbReference type="MIM" id="615938"/>
    </disease>
    <text>The disease is caused by variants affecting the gene represented in this entry.</text>
</comment>
<comment type="miscellaneous">
    <molecule>Isoform 2</molecule>
    <text evidence="4">Acts as a proto-oncogene. Retains ability to bind CDK4, but unable to catalyze efficiently RB phosphorylation and inactivation.</text>
</comment>
<comment type="similarity">
    <text evidence="14">Belongs to the cyclin family. Cyclin D subfamily.</text>
</comment>
<evidence type="ECO:0000250" key="1">
    <source>
        <dbReference type="UniProtKB" id="P24385"/>
    </source>
</evidence>
<evidence type="ECO:0000250" key="2">
    <source>
        <dbReference type="UniProtKB" id="P30280"/>
    </source>
</evidence>
<evidence type="ECO:0000256" key="3">
    <source>
        <dbReference type="SAM" id="MobiDB-lite"/>
    </source>
</evidence>
<evidence type="ECO:0000269" key="4">
    <source>
    </source>
</evidence>
<evidence type="ECO:0000269" key="5">
    <source>
    </source>
</evidence>
<evidence type="ECO:0000269" key="6">
    <source>
    </source>
</evidence>
<evidence type="ECO:0000269" key="7">
    <source>
    </source>
</evidence>
<evidence type="ECO:0000269" key="8">
    <source>
    </source>
</evidence>
<evidence type="ECO:0000269" key="9">
    <source>
    </source>
</evidence>
<evidence type="ECO:0000269" key="10">
    <source>
    </source>
</evidence>
<evidence type="ECO:0000269" key="11">
    <source ref="5"/>
</evidence>
<evidence type="ECO:0000303" key="12">
    <source>
    </source>
</evidence>
<evidence type="ECO:0000303" key="13">
    <source ref="11"/>
</evidence>
<evidence type="ECO:0000305" key="14"/>
<evidence type="ECO:0000312" key="15">
    <source>
        <dbReference type="HGNC" id="HGNC:1583"/>
    </source>
</evidence>
<evidence type="ECO:0007744" key="16">
    <source>
    </source>
</evidence>
<reference key="1">
    <citation type="journal article" date="1992" name="Genomics">
        <title>Molecular cloning and chromosomal mapping of CCND genes encoding human D-type cyclins.</title>
        <authorList>
            <person name="Xiong Y."/>
            <person name="Menninger J."/>
            <person name="Beach D."/>
            <person name="Ward D.C."/>
        </authorList>
    </citation>
    <scope>NUCLEOTIDE SEQUENCE [MRNA] (ISOFORM 1)</scope>
</reference>
<reference key="2">
    <citation type="journal article" date="1993" name="Oncogene">
        <title>Cyclins D1 and D2 are differentially expressed in human B-lymphoid cell lines.</title>
        <authorList>
            <person name="Palmero I."/>
            <person name="Holder A."/>
            <person name="Sinclair A.J."/>
            <person name="Dickson C."/>
            <person name="Peters G."/>
        </authorList>
    </citation>
    <scope>NUCLEOTIDE SEQUENCE [MRNA] (ISOFORM 1)</scope>
</reference>
<reference key="3">
    <citation type="submission" date="1993-03" db="EMBL/GenBank/DDBJ databases">
        <authorList>
            <person name="Miyajima N."/>
        </authorList>
    </citation>
    <scope>NUCLEOTIDE SEQUENCE [MRNA] (ISOFORM 1)</scope>
    <source>
        <tissue>Bone marrow</tissue>
    </source>
</reference>
<reference key="4">
    <citation type="submission" date="2004-10" db="EMBL/GenBank/DDBJ databases">
        <title>Cloning of human full-length CDSs in BD Creator(TM) system donor vector.</title>
        <authorList>
            <person name="Kalnine N."/>
            <person name="Chen X."/>
            <person name="Rolfs A."/>
            <person name="Halleck A."/>
            <person name="Hines L."/>
            <person name="Eisenstein S."/>
            <person name="Koundinya M."/>
            <person name="Raphael J."/>
            <person name="Moreira D."/>
            <person name="Kelley T."/>
            <person name="LaBaer J."/>
            <person name="Lin Y."/>
            <person name="Phelan M."/>
            <person name="Farmer A."/>
        </authorList>
    </citation>
    <scope>NUCLEOTIDE SEQUENCE [LARGE SCALE MRNA] (ISOFORM 1)</scope>
</reference>
<reference key="5">
    <citation type="submission" date="2002-06" db="EMBL/GenBank/DDBJ databases">
        <authorList>
            <consortium name="NIEHS SNPs program"/>
        </authorList>
    </citation>
    <scope>NUCLEOTIDE SEQUENCE [GENOMIC DNA]</scope>
    <scope>VARIANT ARG-268</scope>
</reference>
<reference key="6">
    <citation type="journal article" date="2004" name="Nat. Genet.">
        <title>Complete sequencing and characterization of 21,243 full-length human cDNAs.</title>
        <authorList>
            <person name="Ota T."/>
            <person name="Suzuki Y."/>
            <person name="Nishikawa T."/>
            <person name="Otsuki T."/>
            <person name="Sugiyama T."/>
            <person name="Irie R."/>
            <person name="Wakamatsu A."/>
            <person name="Hayashi K."/>
            <person name="Sato H."/>
            <person name="Nagai K."/>
            <person name="Kimura K."/>
            <person name="Makita H."/>
            <person name="Sekine M."/>
            <person name="Obayashi M."/>
            <person name="Nishi T."/>
            <person name="Shibahara T."/>
            <person name="Tanaka T."/>
            <person name="Ishii S."/>
            <person name="Yamamoto J."/>
            <person name="Saito K."/>
            <person name="Kawai Y."/>
            <person name="Isono Y."/>
            <person name="Nakamura Y."/>
            <person name="Nagahari K."/>
            <person name="Murakami K."/>
            <person name="Yasuda T."/>
            <person name="Iwayanagi T."/>
            <person name="Wagatsuma M."/>
            <person name="Shiratori A."/>
            <person name="Sudo H."/>
            <person name="Hosoiri T."/>
            <person name="Kaku Y."/>
            <person name="Kodaira H."/>
            <person name="Kondo H."/>
            <person name="Sugawara M."/>
            <person name="Takahashi M."/>
            <person name="Kanda K."/>
            <person name="Yokoi T."/>
            <person name="Furuya T."/>
            <person name="Kikkawa E."/>
            <person name="Omura Y."/>
            <person name="Abe K."/>
            <person name="Kamihara K."/>
            <person name="Katsuta N."/>
            <person name="Sato K."/>
            <person name="Tanikawa M."/>
            <person name="Yamazaki M."/>
            <person name="Ninomiya K."/>
            <person name="Ishibashi T."/>
            <person name="Yamashita H."/>
            <person name="Murakawa K."/>
            <person name="Fujimori K."/>
            <person name="Tanai H."/>
            <person name="Kimata M."/>
            <person name="Watanabe M."/>
            <person name="Hiraoka S."/>
            <person name="Chiba Y."/>
            <person name="Ishida S."/>
            <person name="Ono Y."/>
            <person name="Takiguchi S."/>
            <person name="Watanabe S."/>
            <person name="Yosida M."/>
            <person name="Hotuta T."/>
            <person name="Kusano J."/>
            <person name="Kanehori K."/>
            <person name="Takahashi-Fujii A."/>
            <person name="Hara H."/>
            <person name="Tanase T.-O."/>
            <person name="Nomura Y."/>
            <person name="Togiya S."/>
            <person name="Komai F."/>
            <person name="Hara R."/>
            <person name="Takeuchi K."/>
            <person name="Arita M."/>
            <person name="Imose N."/>
            <person name="Musashino K."/>
            <person name="Yuuki H."/>
            <person name="Oshima A."/>
            <person name="Sasaki N."/>
            <person name="Aotsuka S."/>
            <person name="Yoshikawa Y."/>
            <person name="Matsunawa H."/>
            <person name="Ichihara T."/>
            <person name="Shiohata N."/>
            <person name="Sano S."/>
            <person name="Moriya S."/>
            <person name="Momiyama H."/>
            <person name="Satoh N."/>
            <person name="Takami S."/>
            <person name="Terashima Y."/>
            <person name="Suzuki O."/>
            <person name="Nakagawa S."/>
            <person name="Senoh A."/>
            <person name="Mizoguchi H."/>
            <person name="Goto Y."/>
            <person name="Shimizu F."/>
            <person name="Wakebe H."/>
            <person name="Hishigaki H."/>
            <person name="Watanabe T."/>
            <person name="Sugiyama A."/>
            <person name="Takemoto M."/>
            <person name="Kawakami B."/>
            <person name="Yamazaki M."/>
            <person name="Watanabe K."/>
            <person name="Kumagai A."/>
            <person name="Itakura S."/>
            <person name="Fukuzumi Y."/>
            <person name="Fujimori Y."/>
            <person name="Komiyama M."/>
            <person name="Tashiro H."/>
            <person name="Tanigami A."/>
            <person name="Fujiwara T."/>
            <person name="Ono T."/>
            <person name="Yamada K."/>
            <person name="Fujii Y."/>
            <person name="Ozaki K."/>
            <person name="Hirao M."/>
            <person name="Ohmori Y."/>
            <person name="Kawabata A."/>
            <person name="Hikiji T."/>
            <person name="Kobatake N."/>
            <person name="Inagaki H."/>
            <person name="Ikema Y."/>
            <person name="Okamoto S."/>
            <person name="Okitani R."/>
            <person name="Kawakami T."/>
            <person name="Noguchi S."/>
            <person name="Itoh T."/>
            <person name="Shigeta K."/>
            <person name="Senba T."/>
            <person name="Matsumura K."/>
            <person name="Nakajima Y."/>
            <person name="Mizuno T."/>
            <person name="Morinaga M."/>
            <person name="Sasaki M."/>
            <person name="Togashi T."/>
            <person name="Oyama M."/>
            <person name="Hata H."/>
            <person name="Watanabe M."/>
            <person name="Komatsu T."/>
            <person name="Mizushima-Sugano J."/>
            <person name="Satoh T."/>
            <person name="Shirai Y."/>
            <person name="Takahashi Y."/>
            <person name="Nakagawa K."/>
            <person name="Okumura K."/>
            <person name="Nagase T."/>
            <person name="Nomura N."/>
            <person name="Kikuchi H."/>
            <person name="Masuho Y."/>
            <person name="Yamashita R."/>
            <person name="Nakai K."/>
            <person name="Yada T."/>
            <person name="Nakamura Y."/>
            <person name="Ohara O."/>
            <person name="Isogai T."/>
            <person name="Sugano S."/>
        </authorList>
    </citation>
    <scope>NUCLEOTIDE SEQUENCE [LARGE SCALE MRNA] (ISOFORM 1)</scope>
</reference>
<reference key="7">
    <citation type="journal article" date="2006" name="Nature">
        <title>The finished DNA sequence of human chromosome 12.</title>
        <authorList>
            <person name="Scherer S.E."/>
            <person name="Muzny D.M."/>
            <person name="Buhay C.J."/>
            <person name="Chen R."/>
            <person name="Cree A."/>
            <person name="Ding Y."/>
            <person name="Dugan-Rocha S."/>
            <person name="Gill R."/>
            <person name="Gunaratne P."/>
            <person name="Harris R.A."/>
            <person name="Hawes A.C."/>
            <person name="Hernandez J."/>
            <person name="Hodgson A.V."/>
            <person name="Hume J."/>
            <person name="Jackson A."/>
            <person name="Khan Z.M."/>
            <person name="Kovar-Smith C."/>
            <person name="Lewis L.R."/>
            <person name="Lozado R.J."/>
            <person name="Metzker M.L."/>
            <person name="Milosavljevic A."/>
            <person name="Miner G.R."/>
            <person name="Montgomery K.T."/>
            <person name="Morgan M.B."/>
            <person name="Nazareth L.V."/>
            <person name="Scott G."/>
            <person name="Sodergren E."/>
            <person name="Song X.-Z."/>
            <person name="Steffen D."/>
            <person name="Lovering R.C."/>
            <person name="Wheeler D.A."/>
            <person name="Worley K.C."/>
            <person name="Yuan Y."/>
            <person name="Zhang Z."/>
            <person name="Adams C.Q."/>
            <person name="Ansari-Lari M.A."/>
            <person name="Ayele M."/>
            <person name="Brown M.J."/>
            <person name="Chen G."/>
            <person name="Chen Z."/>
            <person name="Clerc-Blankenburg K.P."/>
            <person name="Davis C."/>
            <person name="Delgado O."/>
            <person name="Dinh H.H."/>
            <person name="Draper H."/>
            <person name="Gonzalez-Garay M.L."/>
            <person name="Havlak P."/>
            <person name="Jackson L.R."/>
            <person name="Jacob L.S."/>
            <person name="Kelly S.H."/>
            <person name="Li L."/>
            <person name="Li Z."/>
            <person name="Liu J."/>
            <person name="Liu W."/>
            <person name="Lu J."/>
            <person name="Maheshwari M."/>
            <person name="Nguyen B.-V."/>
            <person name="Okwuonu G.O."/>
            <person name="Pasternak S."/>
            <person name="Perez L.M."/>
            <person name="Plopper F.J.H."/>
            <person name="Santibanez J."/>
            <person name="Shen H."/>
            <person name="Tabor P.E."/>
            <person name="Verduzco D."/>
            <person name="Waldron L."/>
            <person name="Wang Q."/>
            <person name="Williams G.A."/>
            <person name="Zhang J."/>
            <person name="Zhou J."/>
            <person name="Allen C.C."/>
            <person name="Amin A.G."/>
            <person name="Anyalebechi V."/>
            <person name="Bailey M."/>
            <person name="Barbaria J.A."/>
            <person name="Bimage K.E."/>
            <person name="Bryant N.P."/>
            <person name="Burch P.E."/>
            <person name="Burkett C.E."/>
            <person name="Burrell K.L."/>
            <person name="Calderon E."/>
            <person name="Cardenas V."/>
            <person name="Carter K."/>
            <person name="Casias K."/>
            <person name="Cavazos I."/>
            <person name="Cavazos S.R."/>
            <person name="Ceasar H."/>
            <person name="Chacko J."/>
            <person name="Chan S.N."/>
            <person name="Chavez D."/>
            <person name="Christopoulos C."/>
            <person name="Chu J."/>
            <person name="Cockrell R."/>
            <person name="Cox C.D."/>
            <person name="Dang M."/>
            <person name="Dathorne S.R."/>
            <person name="David R."/>
            <person name="Davis C.M."/>
            <person name="Davy-Carroll L."/>
            <person name="Deshazo D.R."/>
            <person name="Donlin J.E."/>
            <person name="D'Souza L."/>
            <person name="Eaves K.A."/>
            <person name="Egan A."/>
            <person name="Emery-Cohen A.J."/>
            <person name="Escotto M."/>
            <person name="Flagg N."/>
            <person name="Forbes L.D."/>
            <person name="Gabisi A.M."/>
            <person name="Garza M."/>
            <person name="Hamilton C."/>
            <person name="Henderson N."/>
            <person name="Hernandez O."/>
            <person name="Hines S."/>
            <person name="Hogues M.E."/>
            <person name="Huang M."/>
            <person name="Idlebird D.G."/>
            <person name="Johnson R."/>
            <person name="Jolivet A."/>
            <person name="Jones S."/>
            <person name="Kagan R."/>
            <person name="King L.M."/>
            <person name="Leal B."/>
            <person name="Lebow H."/>
            <person name="Lee S."/>
            <person name="LeVan J.M."/>
            <person name="Lewis L.C."/>
            <person name="London P."/>
            <person name="Lorensuhewa L.M."/>
            <person name="Loulseged H."/>
            <person name="Lovett D.A."/>
            <person name="Lucier A."/>
            <person name="Lucier R.L."/>
            <person name="Ma J."/>
            <person name="Madu R.C."/>
            <person name="Mapua P."/>
            <person name="Martindale A.D."/>
            <person name="Martinez E."/>
            <person name="Massey E."/>
            <person name="Mawhiney S."/>
            <person name="Meador M.G."/>
            <person name="Mendez S."/>
            <person name="Mercado C."/>
            <person name="Mercado I.C."/>
            <person name="Merritt C.E."/>
            <person name="Miner Z.L."/>
            <person name="Minja E."/>
            <person name="Mitchell T."/>
            <person name="Mohabbat F."/>
            <person name="Mohabbat K."/>
            <person name="Montgomery B."/>
            <person name="Moore N."/>
            <person name="Morris S."/>
            <person name="Munidasa M."/>
            <person name="Ngo R.N."/>
            <person name="Nguyen N.B."/>
            <person name="Nickerson E."/>
            <person name="Nwaokelemeh O.O."/>
            <person name="Nwokenkwo S."/>
            <person name="Obregon M."/>
            <person name="Oguh M."/>
            <person name="Oragunye N."/>
            <person name="Oviedo R.J."/>
            <person name="Parish B.J."/>
            <person name="Parker D.N."/>
            <person name="Parrish J."/>
            <person name="Parks K.L."/>
            <person name="Paul H.A."/>
            <person name="Payton B.A."/>
            <person name="Perez A."/>
            <person name="Perrin W."/>
            <person name="Pickens A."/>
            <person name="Primus E.L."/>
            <person name="Pu L.-L."/>
            <person name="Puazo M."/>
            <person name="Quiles M.M."/>
            <person name="Quiroz J.B."/>
            <person name="Rabata D."/>
            <person name="Reeves K."/>
            <person name="Ruiz S.J."/>
            <person name="Shao H."/>
            <person name="Sisson I."/>
            <person name="Sonaike T."/>
            <person name="Sorelle R.P."/>
            <person name="Sutton A.E."/>
            <person name="Svatek A.F."/>
            <person name="Svetz L.A."/>
            <person name="Tamerisa K.S."/>
            <person name="Taylor T.R."/>
            <person name="Teague B."/>
            <person name="Thomas N."/>
            <person name="Thorn R.D."/>
            <person name="Trejos Z.Y."/>
            <person name="Trevino B.K."/>
            <person name="Ukegbu O.N."/>
            <person name="Urban J.B."/>
            <person name="Vasquez L.I."/>
            <person name="Vera V.A."/>
            <person name="Villasana D.M."/>
            <person name="Wang L."/>
            <person name="Ward-Moore S."/>
            <person name="Warren J.T."/>
            <person name="Wei X."/>
            <person name="White F."/>
            <person name="Williamson A.L."/>
            <person name="Wleczyk R."/>
            <person name="Wooden H.S."/>
            <person name="Wooden S.H."/>
            <person name="Yen J."/>
            <person name="Yoon L."/>
            <person name="Yoon V."/>
            <person name="Zorrilla S.E."/>
            <person name="Nelson D."/>
            <person name="Kucherlapati R."/>
            <person name="Weinstock G."/>
            <person name="Gibbs R.A."/>
        </authorList>
    </citation>
    <scope>NUCLEOTIDE SEQUENCE [LARGE SCALE GENOMIC DNA]</scope>
</reference>
<reference key="8">
    <citation type="submission" date="2005-09" db="EMBL/GenBank/DDBJ databases">
        <authorList>
            <person name="Mural R.J."/>
            <person name="Istrail S."/>
            <person name="Sutton G.G."/>
            <person name="Florea L."/>
            <person name="Halpern A.L."/>
            <person name="Mobarry C.M."/>
            <person name="Lippert R."/>
            <person name="Walenz B."/>
            <person name="Shatkay H."/>
            <person name="Dew I."/>
            <person name="Miller J.R."/>
            <person name="Flanigan M.J."/>
            <person name="Edwards N.J."/>
            <person name="Bolanos R."/>
            <person name="Fasulo D."/>
            <person name="Halldorsson B.V."/>
            <person name="Hannenhalli S."/>
            <person name="Turner R."/>
            <person name="Yooseph S."/>
            <person name="Lu F."/>
            <person name="Nusskern D.R."/>
            <person name="Shue B.C."/>
            <person name="Zheng X.H."/>
            <person name="Zhong F."/>
            <person name="Delcher A.L."/>
            <person name="Huson D.H."/>
            <person name="Kravitz S.A."/>
            <person name="Mouchard L."/>
            <person name="Reinert K."/>
            <person name="Remington K.A."/>
            <person name="Clark A.G."/>
            <person name="Waterman M.S."/>
            <person name="Eichler E.E."/>
            <person name="Adams M.D."/>
            <person name="Hunkapiller M.W."/>
            <person name="Myers E.W."/>
            <person name="Venter J.C."/>
        </authorList>
    </citation>
    <scope>NUCLEOTIDE SEQUENCE [LARGE SCALE GENOMIC DNA]</scope>
</reference>
<reference key="9">
    <citation type="journal article" date="2004" name="Genome Res.">
        <title>The status, quality, and expansion of the NIH full-length cDNA project: the Mammalian Gene Collection (MGC).</title>
        <authorList>
            <consortium name="The MGC Project Team"/>
        </authorList>
    </citation>
    <scope>NUCLEOTIDE SEQUENCE [LARGE SCALE MRNA] (ISOFORM 1)</scope>
    <source>
        <tissue>Bone marrow</tissue>
        <tissue>Uterus</tissue>
    </source>
</reference>
<reference key="10">
    <citation type="journal article" date="1992" name="Genomics">
        <title>Genomic organization, chromosomal localization, and independent expression of human cyclin D genes.</title>
        <authorList>
            <person name="Inaba T."/>
            <person name="Matsushime H."/>
            <person name="Valentine M."/>
            <person name="Roussel M.F."/>
            <person name="Sherr C.J."/>
            <person name="Look A.T."/>
        </authorList>
    </citation>
    <scope>NUCLEOTIDE SEQUENCE [GENOMIC DNA] OF 1-240</scope>
    <source>
        <tissue>Placenta</tissue>
    </source>
</reference>
<reference key="11">
    <citation type="submission" date="1998-09" db="EMBL/GenBank/DDBJ databases">
        <authorList>
            <consortium name="The Cancer Genome Anatomy Project (CGAP) at the National Cancer Institute"/>
        </authorList>
    </citation>
    <scope>NUCLEOTIDE SEQUENCE [LARGE SCALE MRNA] OF 105-140 (ISOFORM 2)</scope>
    <source>
        <tissue>Glioblastoma</tissue>
    </source>
</reference>
<reference key="12">
    <citation type="journal article" date="1994" name="Mol. Cell. Biol.">
        <title>Identification of G1 kinase activity for cdk6, a novel cyclin D partner.</title>
        <authorList>
            <person name="Meyerson M."/>
            <person name="Harlow E."/>
        </authorList>
    </citation>
    <scope>FUNCTION</scope>
    <scope>INTERACTION WITH CDK6</scope>
</reference>
<reference key="13">
    <citation type="journal article" date="2008" name="Cell Struct. Funct.">
        <title>Migratory localization of cyclin D2-Cdk4 complex suggests a spatial regulation of the G1-S transition.</title>
        <authorList>
            <person name="Wang Z."/>
            <person name="Xie Y."/>
            <person name="Zhang L."/>
            <person name="Zhang H."/>
            <person name="An X."/>
            <person name="Wang T."/>
            <person name="Meng A."/>
        </authorList>
    </citation>
    <scope>FUNCTION</scope>
    <scope>INTERACTION WITH CDK4</scope>
    <scope>SUBCELLULAR LOCATION</scope>
</reference>
<reference key="14">
    <citation type="journal article" date="2008" name="Oncogene">
        <title>Human and mouse cyclin D2 splice variants: transforming activity and subcellular localization.</title>
        <authorList>
            <person name="Denicourt C."/>
            <person name="Legault P."/>
            <person name="McNabb F.A."/>
            <person name="Rassart E."/>
        </authorList>
    </citation>
    <scope>SUBCELLULAR LOCATION (ISOFORM 2)</scope>
    <scope>ALTERNATIVE SPLICING</scope>
</reference>
<reference key="15">
    <citation type="journal article" date="2012" name="Blood">
        <title>F-box protein FBXL2 targets cyclin D2 for ubiquitination and degradation to inhibit leukemic cell proliferation.</title>
        <authorList>
            <person name="Chen B.B."/>
            <person name="Glasser J.R."/>
            <person name="Coon T.A."/>
            <person name="Zou C."/>
            <person name="Miller H.L."/>
            <person name="Fenton M."/>
            <person name="McDyer J.F."/>
            <person name="Boyiadzis M."/>
            <person name="Mallampalli R.K."/>
        </authorList>
    </citation>
    <scope>UBIQUITINATION BY SCF(FBXL2)</scope>
</reference>
<reference key="16">
    <citation type="journal article" date="2013" name="J. Proteome Res.">
        <title>Toward a comprehensive characterization of a human cancer cell phosphoproteome.</title>
        <authorList>
            <person name="Zhou H."/>
            <person name="Di Palma S."/>
            <person name="Preisinger C."/>
            <person name="Peng M."/>
            <person name="Polat A.N."/>
            <person name="Heck A.J."/>
            <person name="Mohammed S."/>
        </authorList>
    </citation>
    <scope>PHOSPHORYLATION [LARGE SCALE ANALYSIS] AT SER-271</scope>
    <scope>IDENTIFICATION BY MASS SPECTROMETRY [LARGE SCALE ANALYSIS]</scope>
    <source>
        <tissue>Erythroleukemia</tissue>
    </source>
</reference>
<reference key="17">
    <citation type="journal article" date="2014" name="Nat. Genet.">
        <title>De novo CCND2 mutations leading to stabilization of cyclin D2 cause megalencephaly-polymicrogyria-polydactyly-hydrocephalus syndrome.</title>
        <authorList>
            <consortium name="FORGE Canada Consortium"/>
            <person name="Mirzaa G.M."/>
            <person name="Parry D.A."/>
            <person name="Fry A.E."/>
            <person name="Giamanco K.A."/>
            <person name="Schwartzentruber J."/>
            <person name="Vanstone M."/>
            <person name="Logan C.V."/>
            <person name="Roberts N."/>
            <person name="Johnson C.A."/>
            <person name="Singh S."/>
            <person name="Kholmanskikh S.S."/>
            <person name="Adams C."/>
            <person name="Hodge R.D."/>
            <person name="Hevner R.F."/>
            <person name="Bonthron D.T."/>
            <person name="Braun K.P."/>
            <person name="Faivre L."/>
            <person name="Riviere J.B."/>
            <person name="St-Onge J."/>
            <person name="Gripp K.W."/>
            <person name="Mancini G.M."/>
            <person name="Pang K."/>
            <person name="Sweeney E."/>
            <person name="van Esch H."/>
            <person name="Verbeek N."/>
            <person name="Wieczorek D."/>
            <person name="Steinraths M."/>
            <person name="Majewski J."/>
            <person name="Boycott K.M."/>
            <person name="Pilz D.T."/>
            <person name="Ross M.E."/>
            <person name="Dobyns W.B."/>
            <person name="Sheridan E.G."/>
        </authorList>
    </citation>
    <scope>INVOLVEMENT IN MPPH3</scope>
    <scope>VARIANTS MPPH3 ASN-280; ALA-280; ARG-281; LEU-281 AND GLY-284</scope>
</reference>
<reference key="18">
    <citation type="journal article" date="2021" name="Nature">
        <title>CRL4AMBRA1 is a master regulator of D-type cyclins.</title>
        <authorList>
            <person name="Simoneschi D."/>
            <person name="Rona G."/>
            <person name="Zhou N."/>
            <person name="Jeong Y.T."/>
            <person name="Jiang S."/>
            <person name="Milletti G."/>
            <person name="Arbini A.A."/>
            <person name="O'Sullivan A."/>
            <person name="Wang A.A."/>
            <person name="Nithikasem S."/>
            <person name="Keegan S."/>
            <person name="Siu Y."/>
            <person name="Cianfanelli V."/>
            <person name="Maiani E."/>
            <person name="Nazio F."/>
            <person name="Cecconi F."/>
            <person name="Boccalatte F."/>
            <person name="Fenyoe D."/>
            <person name="Jones D.R."/>
            <person name="Busino L."/>
            <person name="Pagano M."/>
        </authorList>
    </citation>
    <scope>UBIQUITINATION</scope>
</reference>
<reference key="19">
    <citation type="journal article" date="2021" name="Nature">
        <title>The AMBRA1 E3 ligase adaptor regulates the stability of cyclin D.</title>
        <authorList>
            <person name="Chaikovsky A.C."/>
            <person name="Li C."/>
            <person name="Jeng E.E."/>
            <person name="Loebell S."/>
            <person name="Lee M.C."/>
            <person name="Murray C.W."/>
            <person name="Cheng R."/>
            <person name="Demeter J."/>
            <person name="Swaney D.L."/>
            <person name="Chen S.H."/>
            <person name="Newton B.W."/>
            <person name="Johnson J.R."/>
            <person name="Drainas A.P."/>
            <person name="Shue Y.T."/>
            <person name="Seoane J.A."/>
            <person name="Srinivasan P."/>
            <person name="He A."/>
            <person name="Yoshida A."/>
            <person name="Hipkins S.Q."/>
            <person name="McCrea E."/>
            <person name="Poltorack C.D."/>
            <person name="Krogan N.J."/>
            <person name="Diehl J.A."/>
            <person name="Kong C."/>
            <person name="Jackson P.K."/>
            <person name="Curtis C."/>
            <person name="Petrov D.A."/>
            <person name="Bassik M.C."/>
            <person name="Winslow M.M."/>
            <person name="Sage J."/>
        </authorList>
    </citation>
    <scope>UBIQUITINATION</scope>
</reference>
<accession>P30279</accession>
<accession>A8K531</accession>
<accession>Q13955</accession>
<accession>Q5U035</accession>
<protein>
    <recommendedName>
        <fullName evidence="12">G1/S-specific cyclin-D2</fullName>
    </recommendedName>
</protein>
<feature type="chain" id="PRO_0000080437" description="G1/S-specific cyclin-D2">
    <location>
        <begin position="1"/>
        <end position="289"/>
    </location>
</feature>
<feature type="domain" description="Cyclin N-terminal">
    <location>
        <begin position="26"/>
        <end position="151"/>
    </location>
</feature>
<feature type="region of interest" description="Disordered" evidence="3">
    <location>
        <begin position="264"/>
        <end position="289"/>
    </location>
</feature>
<feature type="modified residue" description="Phosphoserine" evidence="16">
    <location>
        <position position="271"/>
    </location>
</feature>
<feature type="modified residue" description="Phosphothreonine" evidence="2">
    <location>
        <position position="280"/>
    </location>
</feature>
<feature type="splice variant" id="VSP_057295" description="In isoform 2." evidence="13">
    <original>EWELVVLGKLKWNLAAVTPHDFIEHILRKLPQQREKLSLIRKHAQTFIALCATDFKFAMYPPSMIATGSVGA</original>
    <variation>VMTGPFLPSFLRFPLSPGQQYAFYHHCQSKFLGSRMTPPIEFTHLWAIAHLIGNHCLFFVCSYYVPRLRAQH</variation>
    <location>
        <begin position="138"/>
        <end position="209"/>
    </location>
</feature>
<feature type="splice variant" id="VSP_057296" description="In isoform 2." evidence="13">
    <location>
        <begin position="210"/>
        <end position="289"/>
    </location>
</feature>
<feature type="sequence variant" id="VAR_018820" description="In dbSNP:rs3217921." evidence="11">
    <original>G</original>
    <variation>R</variation>
    <location>
        <position position="268"/>
    </location>
</feature>
<feature type="sequence variant" id="VAR_072370" description="In MPPH3; dbSNP:rs587777618." evidence="7">
    <original>T</original>
    <variation>A</variation>
    <location>
        <position position="280"/>
    </location>
</feature>
<feature type="sequence variant" id="VAR_072371" description="In MPPH3; dbSNP:rs587777620." evidence="7">
    <original>T</original>
    <variation>N</variation>
    <location>
        <position position="280"/>
    </location>
</feature>
<feature type="sequence variant" id="VAR_072372" description="In MPPH3; dbSNP:rs587777622." evidence="7">
    <original>P</original>
    <variation>L</variation>
    <location>
        <position position="281"/>
    </location>
</feature>
<feature type="sequence variant" id="VAR_072373" description="In MPPH3; dbSNP:rs587777622." evidence="7">
    <original>P</original>
    <variation>R</variation>
    <location>
        <position position="281"/>
    </location>
</feature>
<feature type="sequence variant" id="VAR_072374" description="In MPPH3; dbSNP:rs777786993." evidence="7">
    <original>V</original>
    <variation>G</variation>
    <location>
        <position position="284"/>
    </location>
</feature>
<feature type="sequence conflict" description="In Ref. 10; AAA51928." evidence="14" ref="10">
    <original>KL</original>
    <variation>NV</variation>
    <location>
        <begin position="166"/>
        <end position="167"/>
    </location>
</feature>
<feature type="sequence conflict" description="In Ref. 10; AAA51928." evidence="14" ref="10">
    <original>T</original>
    <variation>H</variation>
    <location>
        <position position="224"/>
    </location>
</feature>
<dbReference type="EMBL" id="M90813">
    <property type="protein sequence ID" value="AAA51926.1"/>
    <property type="molecule type" value="mRNA"/>
</dbReference>
<dbReference type="EMBL" id="X68452">
    <property type="protein sequence ID" value="CAA48493.1"/>
    <property type="molecule type" value="mRNA"/>
</dbReference>
<dbReference type="EMBL" id="D13639">
    <property type="protein sequence ID" value="BAA02802.1"/>
    <property type="molecule type" value="mRNA"/>
</dbReference>
<dbReference type="EMBL" id="BT019847">
    <property type="protein sequence ID" value="AAV38650.1"/>
    <property type="molecule type" value="mRNA"/>
</dbReference>
<dbReference type="EMBL" id="AF518005">
    <property type="protein sequence ID" value="AAM54041.1"/>
    <property type="molecule type" value="Genomic_DNA"/>
</dbReference>
<dbReference type="EMBL" id="AK291146">
    <property type="protein sequence ID" value="BAF83835.1"/>
    <property type="molecule type" value="mRNA"/>
</dbReference>
<dbReference type="EMBL" id="AC006122">
    <property type="status" value="NOT_ANNOTATED_CDS"/>
    <property type="molecule type" value="Genomic_DNA"/>
</dbReference>
<dbReference type="EMBL" id="CH471116">
    <property type="protein sequence ID" value="EAW88851.1"/>
    <property type="molecule type" value="Genomic_DNA"/>
</dbReference>
<dbReference type="EMBL" id="BC010958">
    <property type="protein sequence ID" value="AAH10958.1"/>
    <property type="molecule type" value="mRNA"/>
</dbReference>
<dbReference type="EMBL" id="BC089384">
    <property type="protein sequence ID" value="AAH89384.1"/>
    <property type="molecule type" value="mRNA"/>
</dbReference>
<dbReference type="EMBL" id="M88083">
    <property type="protein sequence ID" value="AAA51928.1"/>
    <property type="molecule type" value="Genomic_DNA"/>
</dbReference>
<dbReference type="EMBL" id="M88080">
    <property type="protein sequence ID" value="AAA51928.1"/>
    <property type="status" value="JOINED"/>
    <property type="molecule type" value="Genomic_DNA"/>
</dbReference>
<dbReference type="EMBL" id="M88081">
    <property type="protein sequence ID" value="AAA51928.1"/>
    <property type="status" value="JOINED"/>
    <property type="molecule type" value="Genomic_DNA"/>
</dbReference>
<dbReference type="EMBL" id="M88082">
    <property type="protein sequence ID" value="AAA51928.1"/>
    <property type="status" value="JOINED"/>
    <property type="molecule type" value="Genomic_DNA"/>
</dbReference>
<dbReference type="EMBL" id="AI146555">
    <property type="status" value="NOT_ANNOTATED_CDS"/>
    <property type="molecule type" value="mRNA"/>
</dbReference>
<dbReference type="CCDS" id="CCDS8524.1">
    <molecule id="P30279-1"/>
</dbReference>
<dbReference type="PIR" id="A42822">
    <property type="entry name" value="A42822"/>
</dbReference>
<dbReference type="RefSeq" id="NP_001750.1">
    <molecule id="P30279-1"/>
    <property type="nucleotide sequence ID" value="NM_001759.4"/>
</dbReference>
<dbReference type="PDB" id="6EI2">
    <property type="method" value="X-ray"/>
    <property type="resolution" value="1.61 A"/>
    <property type="chains" value="C=114-123"/>
</dbReference>
<dbReference type="PDBsum" id="6EI2"/>
<dbReference type="SMR" id="P30279"/>
<dbReference type="BioGRID" id="107334">
    <property type="interactions" value="150"/>
</dbReference>
<dbReference type="ComplexPortal" id="CPX-2011">
    <property type="entry name" value="Cyclin D2-CDK4 complex"/>
</dbReference>
<dbReference type="CORUM" id="P30279"/>
<dbReference type="DIP" id="DIP-178N"/>
<dbReference type="FunCoup" id="P30279">
    <property type="interactions" value="1976"/>
</dbReference>
<dbReference type="IntAct" id="P30279">
    <property type="interactions" value="16"/>
</dbReference>
<dbReference type="MINT" id="P30279"/>
<dbReference type="STRING" id="9606.ENSP00000261254"/>
<dbReference type="BindingDB" id="P30279"/>
<dbReference type="ChEMBL" id="CHEMBL3301385"/>
<dbReference type="ChEMBL" id="CHEMBL3301386"/>
<dbReference type="iPTMnet" id="P30279"/>
<dbReference type="PhosphoSitePlus" id="P30279"/>
<dbReference type="BioMuta" id="CCND2"/>
<dbReference type="DMDM" id="231741"/>
<dbReference type="jPOST" id="P30279"/>
<dbReference type="MassIVE" id="P30279"/>
<dbReference type="PaxDb" id="9606-ENSP00000261254"/>
<dbReference type="PeptideAtlas" id="P30279"/>
<dbReference type="ProteomicsDB" id="54647">
    <molecule id="P30279-1"/>
</dbReference>
<dbReference type="Pumba" id="P30279"/>
<dbReference type="Antibodypedia" id="10540">
    <property type="antibodies" value="825 antibodies from 39 providers"/>
</dbReference>
<dbReference type="DNASU" id="894"/>
<dbReference type="Ensembl" id="ENST00000261254.8">
    <molecule id="P30279-1"/>
    <property type="protein sequence ID" value="ENSP00000261254.3"/>
    <property type="gene ID" value="ENSG00000118971.9"/>
</dbReference>
<dbReference type="Ensembl" id="ENST00000676279.1">
    <molecule id="P30279-1"/>
    <property type="protein sequence ID" value="ENSP00000502597.1"/>
    <property type="gene ID" value="ENSG00000118971.9"/>
</dbReference>
<dbReference type="Ensembl" id="ENST00000676411.1">
    <molecule id="P30279-1"/>
    <property type="protein sequence ID" value="ENSP00000502654.1"/>
    <property type="gene ID" value="ENSG00000118971.9"/>
</dbReference>
<dbReference type="GeneID" id="894"/>
<dbReference type="KEGG" id="hsa:894"/>
<dbReference type="MANE-Select" id="ENST00000261254.8">
    <property type="protein sequence ID" value="ENSP00000261254.3"/>
    <property type="RefSeq nucleotide sequence ID" value="NM_001759.4"/>
    <property type="RefSeq protein sequence ID" value="NP_001750.1"/>
</dbReference>
<dbReference type="UCSC" id="uc001qmo.4">
    <molecule id="P30279-1"/>
    <property type="organism name" value="human"/>
</dbReference>
<dbReference type="AGR" id="HGNC:1583"/>
<dbReference type="CTD" id="894"/>
<dbReference type="DisGeNET" id="894"/>
<dbReference type="GeneCards" id="CCND2"/>
<dbReference type="GeneReviews" id="CCND2"/>
<dbReference type="HGNC" id="HGNC:1583">
    <property type="gene designation" value="CCND2"/>
</dbReference>
<dbReference type="HPA" id="ENSG00000118971">
    <property type="expression patterns" value="Low tissue specificity"/>
</dbReference>
<dbReference type="MalaCards" id="CCND2"/>
<dbReference type="MIM" id="123833">
    <property type="type" value="gene"/>
</dbReference>
<dbReference type="MIM" id="615938">
    <property type="type" value="phenotype"/>
</dbReference>
<dbReference type="neXtProt" id="NX_P30279"/>
<dbReference type="OpenTargets" id="ENSG00000118971"/>
<dbReference type="Orphanet" id="83473">
    <property type="disease" value="Megalencephaly-polymicrogyria-postaxial polydactyly-hydrocephalus syndrome"/>
</dbReference>
<dbReference type="PharmGKB" id="PA26150"/>
<dbReference type="VEuPathDB" id="HostDB:ENSG00000118971"/>
<dbReference type="eggNOG" id="KOG0656">
    <property type="taxonomic scope" value="Eukaryota"/>
</dbReference>
<dbReference type="GeneTree" id="ENSGT00940000155180"/>
<dbReference type="HOGENOM" id="CLU_052190_0_0_1"/>
<dbReference type="InParanoid" id="P30279"/>
<dbReference type="OMA" id="CLEMDTN"/>
<dbReference type="OrthoDB" id="306099at2759"/>
<dbReference type="PAN-GO" id="P30279">
    <property type="GO annotations" value="7 GO annotations based on evolutionary models"/>
</dbReference>
<dbReference type="PhylomeDB" id="P30279"/>
<dbReference type="TreeFam" id="TF101004"/>
<dbReference type="PathwayCommons" id="P30279"/>
<dbReference type="Reactome" id="R-HSA-69231">
    <property type="pathway name" value="Cyclin D associated events in G1"/>
</dbReference>
<dbReference type="Reactome" id="R-HSA-8934593">
    <property type="pathway name" value="Regulation of RUNX1 Expression and Activity"/>
</dbReference>
<dbReference type="Reactome" id="R-HSA-9661069">
    <property type="pathway name" value="Defective binding of RB1 mutants to E2F1,(E2F2, E2F3)"/>
</dbReference>
<dbReference type="Reactome" id="R-HSA-9754119">
    <property type="pathway name" value="Drug-mediated inhibition of CDK4/CDK6 activity"/>
</dbReference>
<dbReference type="SignaLink" id="P30279"/>
<dbReference type="SIGNOR" id="P30279"/>
<dbReference type="BioGRID-ORCS" id="894">
    <property type="hits" value="55 hits in 1186 CRISPR screens"/>
</dbReference>
<dbReference type="ChiTaRS" id="CCND2">
    <property type="organism name" value="human"/>
</dbReference>
<dbReference type="GeneWiki" id="Cyclin_D2"/>
<dbReference type="GenomeRNAi" id="894"/>
<dbReference type="Pharos" id="P30279">
    <property type="development level" value="Tbio"/>
</dbReference>
<dbReference type="PRO" id="PR:P30279"/>
<dbReference type="Proteomes" id="UP000005640">
    <property type="component" value="Chromosome 12"/>
</dbReference>
<dbReference type="RNAct" id="P30279">
    <property type="molecule type" value="protein"/>
</dbReference>
<dbReference type="Bgee" id="ENSG00000118971">
    <property type="expression patterns" value="Expressed in adrenal tissue and 205 other cell types or tissues"/>
</dbReference>
<dbReference type="ExpressionAtlas" id="P30279">
    <property type="expression patterns" value="baseline and differential"/>
</dbReference>
<dbReference type="GO" id="GO:0000785">
    <property type="term" value="C:chromatin"/>
    <property type="evidence" value="ECO:0000314"/>
    <property type="project" value="UniProtKB"/>
</dbReference>
<dbReference type="GO" id="GO:0097129">
    <property type="term" value="C:cyclin D2-CDK4 complex"/>
    <property type="evidence" value="ECO:0000353"/>
    <property type="project" value="ComplexPortal"/>
</dbReference>
<dbReference type="GO" id="GO:0000307">
    <property type="term" value="C:cyclin-dependent protein kinase holoenzyme complex"/>
    <property type="evidence" value="ECO:0000314"/>
    <property type="project" value="UniProtKB"/>
</dbReference>
<dbReference type="GO" id="GO:0005737">
    <property type="term" value="C:cytoplasm"/>
    <property type="evidence" value="ECO:0000318"/>
    <property type="project" value="GO_Central"/>
</dbReference>
<dbReference type="GO" id="GO:0005829">
    <property type="term" value="C:cytosol"/>
    <property type="evidence" value="ECO:0000314"/>
    <property type="project" value="UniProtKB"/>
</dbReference>
<dbReference type="GO" id="GO:0005815">
    <property type="term" value="C:microtubule organizing center"/>
    <property type="evidence" value="ECO:0000318"/>
    <property type="project" value="GO_Central"/>
</dbReference>
<dbReference type="GO" id="GO:0031965">
    <property type="term" value="C:nuclear membrane"/>
    <property type="evidence" value="ECO:0000314"/>
    <property type="project" value="UniProtKB"/>
</dbReference>
<dbReference type="GO" id="GO:0005730">
    <property type="term" value="C:nucleolus"/>
    <property type="evidence" value="ECO:0000314"/>
    <property type="project" value="UniProtKB"/>
</dbReference>
<dbReference type="GO" id="GO:0005654">
    <property type="term" value="C:nucleoplasm"/>
    <property type="evidence" value="ECO:0000314"/>
    <property type="project" value="HPA"/>
</dbReference>
<dbReference type="GO" id="GO:0005634">
    <property type="term" value="C:nucleus"/>
    <property type="evidence" value="ECO:0000314"/>
    <property type="project" value="UniProtKB"/>
</dbReference>
<dbReference type="GO" id="GO:0061575">
    <property type="term" value="F:cyclin-dependent protein serine/threonine kinase activator activity"/>
    <property type="evidence" value="ECO:0000314"/>
    <property type="project" value="UniProt"/>
</dbReference>
<dbReference type="GO" id="GO:0016538">
    <property type="term" value="F:cyclin-dependent protein serine/threonine kinase regulator activity"/>
    <property type="evidence" value="ECO:0000318"/>
    <property type="project" value="GO_Central"/>
</dbReference>
<dbReference type="GO" id="GO:0019901">
    <property type="term" value="F:protein kinase binding"/>
    <property type="evidence" value="ECO:0000353"/>
    <property type="project" value="BHF-UCL"/>
</dbReference>
<dbReference type="GO" id="GO:0043539">
    <property type="term" value="F:protein serine/threonine kinase activator activity"/>
    <property type="evidence" value="ECO:0000314"/>
    <property type="project" value="BHF-UCL"/>
</dbReference>
<dbReference type="GO" id="GO:0008344">
    <property type="term" value="P:adult locomotory behavior"/>
    <property type="evidence" value="ECO:0007669"/>
    <property type="project" value="Ensembl"/>
</dbReference>
<dbReference type="GO" id="GO:0051301">
    <property type="term" value="P:cell division"/>
    <property type="evidence" value="ECO:0007669"/>
    <property type="project" value="UniProtKB-KW"/>
</dbReference>
<dbReference type="GO" id="GO:0071481">
    <property type="term" value="P:cellular response to X-ray"/>
    <property type="evidence" value="ECO:0007669"/>
    <property type="project" value="Ensembl"/>
</dbReference>
<dbReference type="GO" id="GO:0000082">
    <property type="term" value="P:G1/S transition of mitotic cell cycle"/>
    <property type="evidence" value="ECO:0000314"/>
    <property type="project" value="UniProt"/>
</dbReference>
<dbReference type="GO" id="GO:0007616">
    <property type="term" value="P:long-term memory"/>
    <property type="evidence" value="ECO:0007669"/>
    <property type="project" value="Ensembl"/>
</dbReference>
<dbReference type="GO" id="GO:0043066">
    <property type="term" value="P:negative regulation of apoptotic process"/>
    <property type="evidence" value="ECO:0000315"/>
    <property type="project" value="BHF-UCL"/>
</dbReference>
<dbReference type="GO" id="GO:0008284">
    <property type="term" value="P:positive regulation of cell population proliferation"/>
    <property type="evidence" value="ECO:0000315"/>
    <property type="project" value="BHF-UCL"/>
</dbReference>
<dbReference type="GO" id="GO:1900087">
    <property type="term" value="P:positive regulation of G1/S transition of mitotic cell cycle"/>
    <property type="evidence" value="ECO:0000315"/>
    <property type="project" value="BHF-UCL"/>
</dbReference>
<dbReference type="CDD" id="cd20577">
    <property type="entry name" value="CYCLIN_CCND2_rpt2"/>
    <property type="match status" value="1"/>
</dbReference>
<dbReference type="FunFam" id="1.10.472.10:FF:000012">
    <property type="entry name" value="G1/S-specific cyclin-D1"/>
    <property type="match status" value="1"/>
</dbReference>
<dbReference type="FunFam" id="1.10.472.10:FF:000120">
    <property type="entry name" value="G1/S-specific cyclin-D1"/>
    <property type="match status" value="1"/>
</dbReference>
<dbReference type="Gene3D" id="1.10.472.10">
    <property type="entry name" value="Cyclin-like"/>
    <property type="match status" value="2"/>
</dbReference>
<dbReference type="InterPro" id="IPR039361">
    <property type="entry name" value="Cyclin"/>
</dbReference>
<dbReference type="InterPro" id="IPR013763">
    <property type="entry name" value="Cyclin-like_dom"/>
</dbReference>
<dbReference type="InterPro" id="IPR036915">
    <property type="entry name" value="Cyclin-like_sf"/>
</dbReference>
<dbReference type="InterPro" id="IPR004367">
    <property type="entry name" value="Cyclin_C-dom"/>
</dbReference>
<dbReference type="InterPro" id="IPR006671">
    <property type="entry name" value="Cyclin_N"/>
</dbReference>
<dbReference type="InterPro" id="IPR048258">
    <property type="entry name" value="Cyclins_cyclin-box"/>
</dbReference>
<dbReference type="PANTHER" id="PTHR10177">
    <property type="entry name" value="CYCLINS"/>
    <property type="match status" value="1"/>
</dbReference>
<dbReference type="Pfam" id="PF02984">
    <property type="entry name" value="Cyclin_C"/>
    <property type="match status" value="1"/>
</dbReference>
<dbReference type="Pfam" id="PF00134">
    <property type="entry name" value="Cyclin_N"/>
    <property type="match status" value="1"/>
</dbReference>
<dbReference type="SMART" id="SM00385">
    <property type="entry name" value="CYCLIN"/>
    <property type="match status" value="1"/>
</dbReference>
<dbReference type="SMART" id="SM01332">
    <property type="entry name" value="Cyclin_C"/>
    <property type="match status" value="1"/>
</dbReference>
<dbReference type="SUPFAM" id="SSF47954">
    <property type="entry name" value="Cyclin-like"/>
    <property type="match status" value="2"/>
</dbReference>
<dbReference type="PROSITE" id="PS00292">
    <property type="entry name" value="CYCLINS"/>
    <property type="match status" value="1"/>
</dbReference>
<proteinExistence type="evidence at protein level"/>
<name>CCND2_HUMAN</name>